<gene>
    <name type="primary">ung1</name>
    <name type="ORF">SPCC1183.06</name>
</gene>
<sequence length="322" mass="36705">MTVLNTTDKRKADDTVNKLDGKLKQPRLDNFFKTNTSSPALKDTQVLDNKENNSVSKFNKEKWAENLTPAQRKLLQLEIDTLESSWFDALKDEFLKPYFLNLKEFLMKEWQSQRVFPPKEDIYSWSHHTPLHKTKVILLGQDPYHNIGQAHGLCFSVRPGIPCPPSLVNIYKAIKIDYPDFVIPKTGYLVPWADQGILMLNASLTVRAHQAASHSGKGWETFTSAVLQVALNRNRKGLVILAWGTPAAKRLQGLPLKAHYVLRSVHPSPLSAHRGFFECHHFKKTNEWLEEQYGPEKCINWSAVSEQKAKIKSSELESSSTE</sequence>
<reference key="1">
    <citation type="journal article" date="2003" name="Biochem. Biophys. Res. Commun.">
        <title>A fission yeast homologue of the human uracil-DNA-glycosylase and their roles in causing DNA damage after overexpression.</title>
        <authorList>
            <person name="Elder R.T."/>
            <person name="Zhu X."/>
            <person name="Priet S."/>
            <person name="Chen M."/>
            <person name="Yu M."/>
            <person name="Navarro J.-M."/>
            <person name="Sire J."/>
            <person name="Zhao Y."/>
        </authorList>
    </citation>
    <scope>NUCLEOTIDE SEQUENCE [GENOMIC DNA]</scope>
    <scope>FUNCTION</scope>
    <scope>SUBCELLULAR LOCATION</scope>
    <source>
        <strain>SP223</strain>
    </source>
</reference>
<reference key="2">
    <citation type="journal article" date="2002" name="Nature">
        <title>The genome sequence of Schizosaccharomyces pombe.</title>
        <authorList>
            <person name="Wood V."/>
            <person name="Gwilliam R."/>
            <person name="Rajandream M.A."/>
            <person name="Lyne M.H."/>
            <person name="Lyne R."/>
            <person name="Stewart A."/>
            <person name="Sgouros J.G."/>
            <person name="Peat N."/>
            <person name="Hayles J."/>
            <person name="Baker S.G."/>
            <person name="Basham D."/>
            <person name="Bowman S."/>
            <person name="Brooks K."/>
            <person name="Brown D."/>
            <person name="Brown S."/>
            <person name="Chillingworth T."/>
            <person name="Churcher C.M."/>
            <person name="Collins M."/>
            <person name="Connor R."/>
            <person name="Cronin A."/>
            <person name="Davis P."/>
            <person name="Feltwell T."/>
            <person name="Fraser A."/>
            <person name="Gentles S."/>
            <person name="Goble A."/>
            <person name="Hamlin N."/>
            <person name="Harris D.E."/>
            <person name="Hidalgo J."/>
            <person name="Hodgson G."/>
            <person name="Holroyd S."/>
            <person name="Hornsby T."/>
            <person name="Howarth S."/>
            <person name="Huckle E.J."/>
            <person name="Hunt S."/>
            <person name="Jagels K."/>
            <person name="James K.D."/>
            <person name="Jones L."/>
            <person name="Jones M."/>
            <person name="Leather S."/>
            <person name="McDonald S."/>
            <person name="McLean J."/>
            <person name="Mooney P."/>
            <person name="Moule S."/>
            <person name="Mungall K.L."/>
            <person name="Murphy L.D."/>
            <person name="Niblett D."/>
            <person name="Odell C."/>
            <person name="Oliver K."/>
            <person name="O'Neil S."/>
            <person name="Pearson D."/>
            <person name="Quail M.A."/>
            <person name="Rabbinowitsch E."/>
            <person name="Rutherford K.M."/>
            <person name="Rutter S."/>
            <person name="Saunders D."/>
            <person name="Seeger K."/>
            <person name="Sharp S."/>
            <person name="Skelton J."/>
            <person name="Simmonds M.N."/>
            <person name="Squares R."/>
            <person name="Squares S."/>
            <person name="Stevens K."/>
            <person name="Taylor K."/>
            <person name="Taylor R.G."/>
            <person name="Tivey A."/>
            <person name="Walsh S.V."/>
            <person name="Warren T."/>
            <person name="Whitehead S."/>
            <person name="Woodward J.R."/>
            <person name="Volckaert G."/>
            <person name="Aert R."/>
            <person name="Robben J."/>
            <person name="Grymonprez B."/>
            <person name="Weltjens I."/>
            <person name="Vanstreels E."/>
            <person name="Rieger M."/>
            <person name="Schaefer M."/>
            <person name="Mueller-Auer S."/>
            <person name="Gabel C."/>
            <person name="Fuchs M."/>
            <person name="Duesterhoeft A."/>
            <person name="Fritzc C."/>
            <person name="Holzer E."/>
            <person name="Moestl D."/>
            <person name="Hilbert H."/>
            <person name="Borzym K."/>
            <person name="Langer I."/>
            <person name="Beck A."/>
            <person name="Lehrach H."/>
            <person name="Reinhardt R."/>
            <person name="Pohl T.M."/>
            <person name="Eger P."/>
            <person name="Zimmermann W."/>
            <person name="Wedler H."/>
            <person name="Wambutt R."/>
            <person name="Purnelle B."/>
            <person name="Goffeau A."/>
            <person name="Cadieu E."/>
            <person name="Dreano S."/>
            <person name="Gloux S."/>
            <person name="Lelaure V."/>
            <person name="Mottier S."/>
            <person name="Galibert F."/>
            <person name="Aves S.J."/>
            <person name="Xiang Z."/>
            <person name="Hunt C."/>
            <person name="Moore K."/>
            <person name="Hurst S.M."/>
            <person name="Lucas M."/>
            <person name="Rochet M."/>
            <person name="Gaillardin C."/>
            <person name="Tallada V.A."/>
            <person name="Garzon A."/>
            <person name="Thode G."/>
            <person name="Daga R.R."/>
            <person name="Cruzado L."/>
            <person name="Jimenez J."/>
            <person name="Sanchez M."/>
            <person name="del Rey F."/>
            <person name="Benito J."/>
            <person name="Dominguez A."/>
            <person name="Revuelta J.L."/>
            <person name="Moreno S."/>
            <person name="Armstrong J."/>
            <person name="Forsburg S.L."/>
            <person name="Cerutti L."/>
            <person name="Lowe T."/>
            <person name="McCombie W.R."/>
            <person name="Paulsen I."/>
            <person name="Potashkin J."/>
            <person name="Shpakovski G.V."/>
            <person name="Ussery D."/>
            <person name="Barrell B.G."/>
            <person name="Nurse P."/>
        </authorList>
    </citation>
    <scope>NUCLEOTIDE SEQUENCE [LARGE SCALE GENOMIC DNA]</scope>
    <source>
        <strain>972 / ATCC 24843</strain>
    </source>
</reference>
<proteinExistence type="inferred from homology"/>
<evidence type="ECO:0000255" key="1">
    <source>
        <dbReference type="HAMAP-Rule" id="MF_03166"/>
    </source>
</evidence>
<evidence type="ECO:0000269" key="2">
    <source>
    </source>
</evidence>
<protein>
    <recommendedName>
        <fullName evidence="1">Uracil-DNA glycosylase</fullName>
        <shortName evidence="1">UDG</shortName>
        <ecNumber evidence="1">3.2.2.27</ecNumber>
    </recommendedName>
</protein>
<dbReference type="EC" id="3.2.2.27" evidence="1"/>
<dbReference type="EMBL" id="AF174292">
    <property type="protein sequence ID" value="AAD51974.1"/>
    <property type="molecule type" value="Genomic_DNA"/>
</dbReference>
<dbReference type="EMBL" id="CU329672">
    <property type="protein sequence ID" value="CAA21086.1"/>
    <property type="molecule type" value="Genomic_DNA"/>
</dbReference>
<dbReference type="PIR" id="T40846">
    <property type="entry name" value="T40846"/>
</dbReference>
<dbReference type="RefSeq" id="NP_587889.1">
    <property type="nucleotide sequence ID" value="NM_001022881.2"/>
</dbReference>
<dbReference type="SMR" id="O74834"/>
<dbReference type="BioGRID" id="275436">
    <property type="interactions" value="15"/>
</dbReference>
<dbReference type="FunCoup" id="O74834">
    <property type="interactions" value="626"/>
</dbReference>
<dbReference type="STRING" id="284812.O74834"/>
<dbReference type="iPTMnet" id="O74834"/>
<dbReference type="PaxDb" id="4896-SPCC1183.06.1"/>
<dbReference type="EnsemblFungi" id="SPCC1183.06.1">
    <property type="protein sequence ID" value="SPCC1183.06.1:pep"/>
    <property type="gene ID" value="SPCC1183.06"/>
</dbReference>
<dbReference type="GeneID" id="2538855"/>
<dbReference type="KEGG" id="spo:2538855"/>
<dbReference type="PomBase" id="SPCC1183.06">
    <property type="gene designation" value="ung1"/>
</dbReference>
<dbReference type="VEuPathDB" id="FungiDB:SPCC1183.06"/>
<dbReference type="eggNOG" id="KOG2994">
    <property type="taxonomic scope" value="Eukaryota"/>
</dbReference>
<dbReference type="HOGENOM" id="CLU_032162_2_2_1"/>
<dbReference type="InParanoid" id="O74834"/>
<dbReference type="OMA" id="PDNGYLM"/>
<dbReference type="PhylomeDB" id="O74834"/>
<dbReference type="Reactome" id="R-SPO-110329">
    <property type="pathway name" value="Cleavage of the damaged pyrimidine"/>
</dbReference>
<dbReference type="PRO" id="PR:O74834"/>
<dbReference type="Proteomes" id="UP000002485">
    <property type="component" value="Chromosome III"/>
</dbReference>
<dbReference type="GO" id="GO:0005737">
    <property type="term" value="C:cytoplasm"/>
    <property type="evidence" value="ECO:0000314"/>
    <property type="project" value="PomBase"/>
</dbReference>
<dbReference type="GO" id="GO:0005739">
    <property type="term" value="C:mitochondrion"/>
    <property type="evidence" value="ECO:0000318"/>
    <property type="project" value="GO_Central"/>
</dbReference>
<dbReference type="GO" id="GO:0005634">
    <property type="term" value="C:nucleus"/>
    <property type="evidence" value="ECO:0000314"/>
    <property type="project" value="PomBase"/>
</dbReference>
<dbReference type="GO" id="GO:0004844">
    <property type="term" value="F:uracil DNA N-glycosylase activity"/>
    <property type="evidence" value="ECO:0000314"/>
    <property type="project" value="PomBase"/>
</dbReference>
<dbReference type="GO" id="GO:0006284">
    <property type="term" value="P:base-excision repair"/>
    <property type="evidence" value="ECO:0000315"/>
    <property type="project" value="PomBase"/>
</dbReference>
<dbReference type="GO" id="GO:0097510">
    <property type="term" value="P:base-excision repair, AP site formation via deaminated base removal"/>
    <property type="evidence" value="ECO:0000318"/>
    <property type="project" value="GO_Central"/>
</dbReference>
<dbReference type="GO" id="GO:0043504">
    <property type="term" value="P:mitochondrial DNA repair"/>
    <property type="evidence" value="ECO:0000305"/>
    <property type="project" value="PomBase"/>
</dbReference>
<dbReference type="CDD" id="cd10027">
    <property type="entry name" value="UDG-F1-like"/>
    <property type="match status" value="1"/>
</dbReference>
<dbReference type="FunFam" id="3.40.470.10:FF:000007">
    <property type="entry name" value="Uracil-DNA glycosylase"/>
    <property type="match status" value="1"/>
</dbReference>
<dbReference type="Gene3D" id="3.40.470.10">
    <property type="entry name" value="Uracil-DNA glycosylase-like domain"/>
    <property type="match status" value="1"/>
</dbReference>
<dbReference type="HAMAP" id="MF_00148">
    <property type="entry name" value="UDG"/>
    <property type="match status" value="1"/>
</dbReference>
<dbReference type="InterPro" id="IPR002043">
    <property type="entry name" value="UDG_fam1"/>
</dbReference>
<dbReference type="InterPro" id="IPR018085">
    <property type="entry name" value="Ura-DNA_Glyclase_AS"/>
</dbReference>
<dbReference type="InterPro" id="IPR005122">
    <property type="entry name" value="Uracil-DNA_glycosylase-like"/>
</dbReference>
<dbReference type="InterPro" id="IPR036895">
    <property type="entry name" value="Uracil-DNA_glycosylase-like_sf"/>
</dbReference>
<dbReference type="NCBIfam" id="NF003588">
    <property type="entry name" value="PRK05254.1-1"/>
    <property type="match status" value="1"/>
</dbReference>
<dbReference type="NCBIfam" id="NF003589">
    <property type="entry name" value="PRK05254.1-2"/>
    <property type="match status" value="1"/>
</dbReference>
<dbReference type="NCBIfam" id="NF003592">
    <property type="entry name" value="PRK05254.1-5"/>
    <property type="match status" value="1"/>
</dbReference>
<dbReference type="NCBIfam" id="TIGR00628">
    <property type="entry name" value="ung"/>
    <property type="match status" value="1"/>
</dbReference>
<dbReference type="PANTHER" id="PTHR11264">
    <property type="entry name" value="URACIL-DNA GLYCOSYLASE"/>
    <property type="match status" value="1"/>
</dbReference>
<dbReference type="PANTHER" id="PTHR11264:SF0">
    <property type="entry name" value="URACIL-DNA GLYCOSYLASE"/>
    <property type="match status" value="1"/>
</dbReference>
<dbReference type="Pfam" id="PF03167">
    <property type="entry name" value="UDG"/>
    <property type="match status" value="1"/>
</dbReference>
<dbReference type="SMART" id="SM00986">
    <property type="entry name" value="UDG"/>
    <property type="match status" value="1"/>
</dbReference>
<dbReference type="SMART" id="SM00987">
    <property type="entry name" value="UreE_C"/>
    <property type="match status" value="1"/>
</dbReference>
<dbReference type="SUPFAM" id="SSF52141">
    <property type="entry name" value="Uracil-DNA glycosylase-like"/>
    <property type="match status" value="1"/>
</dbReference>
<dbReference type="PROSITE" id="PS00130">
    <property type="entry name" value="U_DNA_GLYCOSYLASE"/>
    <property type="match status" value="1"/>
</dbReference>
<comment type="function">
    <text evidence="1 2">Excises uracil residues from the DNA which can arise as a result of misincorporation of dUMP residues by DNA polymerase or due to deamination of cytosine.</text>
</comment>
<comment type="catalytic activity">
    <reaction evidence="1">
        <text>Hydrolyzes single-stranded DNA or mismatched double-stranded DNA and polynucleotides, releasing free uracil.</text>
        <dbReference type="EC" id="3.2.2.27"/>
    </reaction>
</comment>
<comment type="subcellular location">
    <subcellularLocation>
        <location evidence="1">Mitochondrion</location>
    </subcellularLocation>
    <subcellularLocation>
        <location evidence="1 2">Nucleus</location>
    </subcellularLocation>
</comment>
<comment type="similarity">
    <text evidence="1">Belongs to the uracil-DNA glycosylase (UDG) superfamily. UNG family.</text>
</comment>
<accession>O74834</accession>
<keyword id="KW-0227">DNA damage</keyword>
<keyword id="KW-0234">DNA repair</keyword>
<keyword id="KW-0378">Hydrolase</keyword>
<keyword id="KW-0496">Mitochondrion</keyword>
<keyword id="KW-0539">Nucleus</keyword>
<keyword id="KW-1185">Reference proteome</keyword>
<name>UNG_SCHPO</name>
<feature type="chain" id="PRO_0000176171" description="Uracil-DNA glycosylase">
    <location>
        <begin position="1"/>
        <end position="322"/>
    </location>
</feature>
<feature type="active site" description="Proton acceptor" evidence="1">
    <location>
        <position position="142"/>
    </location>
</feature>
<organism>
    <name type="scientific">Schizosaccharomyces pombe (strain 972 / ATCC 24843)</name>
    <name type="common">Fission yeast</name>
    <dbReference type="NCBI Taxonomy" id="284812"/>
    <lineage>
        <taxon>Eukaryota</taxon>
        <taxon>Fungi</taxon>
        <taxon>Dikarya</taxon>
        <taxon>Ascomycota</taxon>
        <taxon>Taphrinomycotina</taxon>
        <taxon>Schizosaccharomycetes</taxon>
        <taxon>Schizosaccharomycetales</taxon>
        <taxon>Schizosaccharomycetaceae</taxon>
        <taxon>Schizosaccharomyces</taxon>
    </lineage>
</organism>